<name>PKN1_CHLCV</name>
<keyword id="KW-0067">ATP-binding</keyword>
<keyword id="KW-0418">Kinase</keyword>
<keyword id="KW-0547">Nucleotide-binding</keyword>
<keyword id="KW-0597">Phosphoprotein</keyword>
<keyword id="KW-0723">Serine/threonine-protein kinase</keyword>
<keyword id="KW-0808">Transferase</keyword>
<organism>
    <name type="scientific">Chlamydia caviae (strain ATCC VR-813 / DSM 19441 / 03DC25 / GPIC)</name>
    <name type="common">Chlamydophila caviae</name>
    <dbReference type="NCBI Taxonomy" id="227941"/>
    <lineage>
        <taxon>Bacteria</taxon>
        <taxon>Pseudomonadati</taxon>
        <taxon>Chlamydiota</taxon>
        <taxon>Chlamydiia</taxon>
        <taxon>Chlamydiales</taxon>
        <taxon>Chlamydiaceae</taxon>
        <taxon>Chlamydia/Chlamydophila group</taxon>
        <taxon>Chlamydia</taxon>
    </lineage>
</organism>
<proteinExistence type="inferred from homology"/>
<sequence>MEGEQDIGVEFLGDYKILCYLRKGLWCQDILAEHRFIKKRYILKLLCSELSSSEAFMTAFHEAIIKLATIRHPGIISIENVSQAEGQYFLVTEEKEVPTLSLAQYLSSCSQGLSELEAKDLICQLAEILDYAHANRLIHGGLSLDSVHIDLTGQSPKVFLPELGFSFLLKDQYTQSLLRDSSEKSSFDKLKQILLFQAPETALGTVAEDVYAFGVIVYFLLFRQLPQGAFPLPSEAFPEYVYDWDRLIQSCLSYAVEKRPKKLAPLLVKKTLGEQFLAAKIQCSEEDLREIEEEPQVPSVANILQKVEDKIIEETSDHLEFVLVEAKSIDEAMNTSVDSKEEVVAEDESYSNALQSLLIREPVVSRYVEEEKEEVKPQPLFTEMVFIEGGKFLRGSREGQRDEHPVHEIFLHSFFLDIHPVTNEQFVRYLECSGSEQDKYYNELIRLKDSRIQRRSGKLVIEPGYAKHPVVGVTWYGASGYASWVGKRLPTEAEWEIASCGGVTQLRYPCGEEIDKSQANFFSSDTTPVMSYPANPYGLYDMAGNVYEWCEDWYGYDFYEISAQESHAPQGPAQGVYRVLRGGCWKSLKDDLRCAHRHRNNPGAVNSTYGFRCAKGVK</sequence>
<feature type="chain" id="PRO_0000171186" description="Serine/threonine-protein kinase pkn1">
    <location>
        <begin position="1"/>
        <end position="618"/>
    </location>
</feature>
<feature type="domain" description="Protein kinase" evidence="2">
    <location>
        <begin position="15"/>
        <end position="381"/>
    </location>
</feature>
<feature type="binding site" evidence="2">
    <location>
        <begin position="21"/>
        <end position="29"/>
    </location>
    <ligand>
        <name>ATP</name>
        <dbReference type="ChEBI" id="CHEBI:30616"/>
    </ligand>
</feature>
<feature type="binding site" evidence="2">
    <location>
        <position position="44"/>
    </location>
    <ligand>
        <name>ATP</name>
        <dbReference type="ChEBI" id="CHEBI:30616"/>
    </ligand>
</feature>
<protein>
    <recommendedName>
        <fullName>Serine/threonine-protein kinase pkn1</fullName>
        <ecNumber>2.7.11.1</ecNumber>
    </recommendedName>
</protein>
<comment type="function">
    <text evidence="1">Together with the serine/threonine kinase PknD, may play a role in the specific interactions with host proteins during intracellular growth.</text>
</comment>
<comment type="catalytic activity">
    <reaction>
        <text>L-seryl-[protein] + ATP = O-phospho-L-seryl-[protein] + ADP + H(+)</text>
        <dbReference type="Rhea" id="RHEA:17989"/>
        <dbReference type="Rhea" id="RHEA-COMP:9863"/>
        <dbReference type="Rhea" id="RHEA-COMP:11604"/>
        <dbReference type="ChEBI" id="CHEBI:15378"/>
        <dbReference type="ChEBI" id="CHEBI:29999"/>
        <dbReference type="ChEBI" id="CHEBI:30616"/>
        <dbReference type="ChEBI" id="CHEBI:83421"/>
        <dbReference type="ChEBI" id="CHEBI:456216"/>
        <dbReference type="EC" id="2.7.11.1"/>
    </reaction>
</comment>
<comment type="catalytic activity">
    <reaction>
        <text>L-threonyl-[protein] + ATP = O-phospho-L-threonyl-[protein] + ADP + H(+)</text>
        <dbReference type="Rhea" id="RHEA:46608"/>
        <dbReference type="Rhea" id="RHEA-COMP:11060"/>
        <dbReference type="Rhea" id="RHEA-COMP:11605"/>
        <dbReference type="ChEBI" id="CHEBI:15378"/>
        <dbReference type="ChEBI" id="CHEBI:30013"/>
        <dbReference type="ChEBI" id="CHEBI:30616"/>
        <dbReference type="ChEBI" id="CHEBI:61977"/>
        <dbReference type="ChEBI" id="CHEBI:456216"/>
        <dbReference type="EC" id="2.7.11.1"/>
    </reaction>
</comment>
<comment type="PTM">
    <text evidence="1">Autophosphorylated on serine and threonine residues.</text>
</comment>
<comment type="similarity">
    <text evidence="2">Belongs to the protein kinase superfamily. Ser/Thr protein kinase family.</text>
</comment>
<comment type="caution">
    <text evidence="3">Gly-141 is present instead of the conserved Asp which is expected to be an active site residue.</text>
</comment>
<gene>
    <name type="primary">pkn1</name>
    <name type="ordered locus">CCA_00618</name>
</gene>
<dbReference type="EC" id="2.7.11.1"/>
<dbReference type="EMBL" id="AE015925">
    <property type="protein sequence ID" value="AAP05360.1"/>
    <property type="molecule type" value="Genomic_DNA"/>
</dbReference>
<dbReference type="RefSeq" id="WP_011006575.1">
    <property type="nucleotide sequence ID" value="NC_003361.3"/>
</dbReference>
<dbReference type="SMR" id="Q822R1"/>
<dbReference type="STRING" id="227941.CCA_00618"/>
<dbReference type="KEGG" id="cca:CCA_00618"/>
<dbReference type="eggNOG" id="COG0515">
    <property type="taxonomic scope" value="Bacteria"/>
</dbReference>
<dbReference type="eggNOG" id="COG1262">
    <property type="taxonomic scope" value="Bacteria"/>
</dbReference>
<dbReference type="HOGENOM" id="CLU_408763_0_0_0"/>
<dbReference type="OrthoDB" id="9768004at2"/>
<dbReference type="Proteomes" id="UP000002193">
    <property type="component" value="Chromosome"/>
</dbReference>
<dbReference type="GO" id="GO:0005524">
    <property type="term" value="F:ATP binding"/>
    <property type="evidence" value="ECO:0007669"/>
    <property type="project" value="UniProtKB-KW"/>
</dbReference>
<dbReference type="GO" id="GO:0120147">
    <property type="term" value="F:formylglycine-generating oxidase activity"/>
    <property type="evidence" value="ECO:0007669"/>
    <property type="project" value="TreeGrafter"/>
</dbReference>
<dbReference type="GO" id="GO:0106310">
    <property type="term" value="F:protein serine kinase activity"/>
    <property type="evidence" value="ECO:0007669"/>
    <property type="project" value="RHEA"/>
</dbReference>
<dbReference type="GO" id="GO:0004674">
    <property type="term" value="F:protein serine/threonine kinase activity"/>
    <property type="evidence" value="ECO:0007669"/>
    <property type="project" value="UniProtKB-KW"/>
</dbReference>
<dbReference type="Gene3D" id="3.90.1580.10">
    <property type="entry name" value="paralog of FGE (formylglycine-generating enzyme)"/>
    <property type="match status" value="1"/>
</dbReference>
<dbReference type="Gene3D" id="3.30.200.20">
    <property type="entry name" value="Phosphorylase Kinase, domain 1"/>
    <property type="match status" value="1"/>
</dbReference>
<dbReference type="Gene3D" id="1.10.510.10">
    <property type="entry name" value="Transferase(Phosphotransferase) domain 1"/>
    <property type="match status" value="1"/>
</dbReference>
<dbReference type="InterPro" id="IPR016187">
    <property type="entry name" value="CTDL_fold"/>
</dbReference>
<dbReference type="InterPro" id="IPR011009">
    <property type="entry name" value="Kinase-like_dom_sf"/>
</dbReference>
<dbReference type="InterPro" id="IPR000719">
    <property type="entry name" value="Prot_kinase_dom"/>
</dbReference>
<dbReference type="InterPro" id="IPR051043">
    <property type="entry name" value="Sulfatase_Mod_Factor_Kinase"/>
</dbReference>
<dbReference type="InterPro" id="IPR005532">
    <property type="entry name" value="SUMF_dom"/>
</dbReference>
<dbReference type="InterPro" id="IPR042095">
    <property type="entry name" value="SUMF_sf"/>
</dbReference>
<dbReference type="PANTHER" id="PTHR23150:SF19">
    <property type="entry name" value="FORMYLGLYCINE-GENERATING ENZYME"/>
    <property type="match status" value="1"/>
</dbReference>
<dbReference type="PANTHER" id="PTHR23150">
    <property type="entry name" value="SULFATASE MODIFYING FACTOR 1, 2"/>
    <property type="match status" value="1"/>
</dbReference>
<dbReference type="Pfam" id="PF03781">
    <property type="entry name" value="FGE-sulfatase"/>
    <property type="match status" value="1"/>
</dbReference>
<dbReference type="Pfam" id="PF00069">
    <property type="entry name" value="Pkinase"/>
    <property type="match status" value="1"/>
</dbReference>
<dbReference type="SMART" id="SM00220">
    <property type="entry name" value="S_TKc"/>
    <property type="match status" value="1"/>
</dbReference>
<dbReference type="SUPFAM" id="SSF56436">
    <property type="entry name" value="C-type lectin-like"/>
    <property type="match status" value="1"/>
</dbReference>
<dbReference type="SUPFAM" id="SSF56112">
    <property type="entry name" value="Protein kinase-like (PK-like)"/>
    <property type="match status" value="1"/>
</dbReference>
<dbReference type="PROSITE" id="PS50011">
    <property type="entry name" value="PROTEIN_KINASE_DOM"/>
    <property type="match status" value="1"/>
</dbReference>
<evidence type="ECO:0000250" key="1"/>
<evidence type="ECO:0000255" key="2">
    <source>
        <dbReference type="PROSITE-ProRule" id="PRU00159"/>
    </source>
</evidence>
<evidence type="ECO:0000305" key="3"/>
<reference key="1">
    <citation type="journal article" date="2003" name="Nucleic Acids Res.">
        <title>Genome sequence of Chlamydophila caviae (Chlamydia psittaci GPIC): examining the role of niche-specific genes in the evolution of the Chlamydiaceae.</title>
        <authorList>
            <person name="Read T.D."/>
            <person name="Myers G.S.A."/>
            <person name="Brunham R.C."/>
            <person name="Nelson W.C."/>
            <person name="Paulsen I.T."/>
            <person name="Heidelberg J.F."/>
            <person name="Holtzapple E.K."/>
            <person name="Khouri H.M."/>
            <person name="Federova N.B."/>
            <person name="Carty H.A."/>
            <person name="Umayam L.A."/>
            <person name="Haft D.H."/>
            <person name="Peterson J.D."/>
            <person name="Beanan M.J."/>
            <person name="White O."/>
            <person name="Salzberg S.L."/>
            <person name="Hsia R.-C."/>
            <person name="McClarty G."/>
            <person name="Rank R.G."/>
            <person name="Bavoil P.M."/>
            <person name="Fraser C.M."/>
        </authorList>
    </citation>
    <scope>NUCLEOTIDE SEQUENCE [LARGE SCALE GENOMIC DNA]</scope>
    <source>
        <strain>ATCC VR-813 / DSM 19441 / 03DC25 / GPIC</strain>
    </source>
</reference>
<accession>Q822R1</accession>